<proteinExistence type="inferred from homology"/>
<name>NU1M_DROMD</name>
<sequence length="163" mass="18218">MEFILSLIGSLLLIICVLVSVAFLTLLERKVLGYIQIRKGPNKVGLMGIPQPFCDAIKLFTKEQTYPLLSNYLSYYISPIFSLFLSLFVWMCMPFFVKLYSFNLGGLFFLCCTSLGVYTVMVAGWSSNSNYALLGGLRAVAQTISYEVSLALIGFKILLFSLL</sequence>
<geneLocation type="mitochondrion"/>
<evidence type="ECO:0000250" key="1"/>
<evidence type="ECO:0000255" key="2"/>
<evidence type="ECO:0000305" key="3"/>
<comment type="function">
    <text evidence="1">Core subunit of the mitochondrial membrane respiratory chain NADH dehydrogenase (Complex I) that is believed to belong to the minimal assembly required for catalysis. Complex I functions in the transfer of electrons from NADH to the respiratory chain. The immediate electron acceptor for the enzyme is believed to be ubiquinone (By similarity).</text>
</comment>
<comment type="catalytic activity">
    <reaction>
        <text>a ubiquinone + NADH + 5 H(+)(in) = a ubiquinol + NAD(+) + 4 H(+)(out)</text>
        <dbReference type="Rhea" id="RHEA:29091"/>
        <dbReference type="Rhea" id="RHEA-COMP:9565"/>
        <dbReference type="Rhea" id="RHEA-COMP:9566"/>
        <dbReference type="ChEBI" id="CHEBI:15378"/>
        <dbReference type="ChEBI" id="CHEBI:16389"/>
        <dbReference type="ChEBI" id="CHEBI:17976"/>
        <dbReference type="ChEBI" id="CHEBI:57540"/>
        <dbReference type="ChEBI" id="CHEBI:57945"/>
        <dbReference type="EC" id="7.1.1.2"/>
    </reaction>
</comment>
<comment type="subcellular location">
    <subcellularLocation>
        <location evidence="1">Mitochondrion inner membrane</location>
        <topology evidence="1">Multi-pass membrane protein</topology>
    </subcellularLocation>
</comment>
<comment type="similarity">
    <text evidence="3">Belongs to the complex I subunit 1 family.</text>
</comment>
<keyword id="KW-0249">Electron transport</keyword>
<keyword id="KW-0472">Membrane</keyword>
<keyword id="KW-0496">Mitochondrion</keyword>
<keyword id="KW-0999">Mitochondrion inner membrane</keyword>
<keyword id="KW-0520">NAD</keyword>
<keyword id="KW-0679">Respiratory chain</keyword>
<keyword id="KW-1278">Translocase</keyword>
<keyword id="KW-0812">Transmembrane</keyword>
<keyword id="KW-1133">Transmembrane helix</keyword>
<keyword id="KW-0813">Transport</keyword>
<keyword id="KW-0830">Ubiquinone</keyword>
<gene>
    <name type="primary">mt:ND1</name>
    <name type="synonym">ND1</name>
</gene>
<feature type="chain" id="PRO_0000117391" description="NADH-ubiquinone oxidoreductase chain 1">
    <location>
        <begin position="1"/>
        <end position="163"/>
    </location>
</feature>
<feature type="transmembrane region" description="Helical" evidence="2">
    <location>
        <begin position="3"/>
        <end position="23"/>
    </location>
</feature>
<feature type="transmembrane region" description="Helical" evidence="2">
    <location>
        <begin position="77"/>
        <end position="97"/>
    </location>
</feature>
<feature type="transmembrane region" description="Helical" evidence="2">
    <location>
        <begin position="104"/>
        <end position="124"/>
    </location>
</feature>
<feature type="transmembrane region" description="Helical" evidence="2">
    <location>
        <begin position="143"/>
        <end position="163"/>
    </location>
</feature>
<feature type="non-consecutive residues" evidence="3">
    <location>
        <begin position="152"/>
        <end position="153"/>
    </location>
</feature>
<organism>
    <name type="scientific">Drosophila madeirensis</name>
    <name type="common">Fruit fly</name>
    <dbReference type="NCBI Taxonomy" id="30013"/>
    <lineage>
        <taxon>Eukaryota</taxon>
        <taxon>Metazoa</taxon>
        <taxon>Ecdysozoa</taxon>
        <taxon>Arthropoda</taxon>
        <taxon>Hexapoda</taxon>
        <taxon>Insecta</taxon>
        <taxon>Pterygota</taxon>
        <taxon>Neoptera</taxon>
        <taxon>Endopterygota</taxon>
        <taxon>Diptera</taxon>
        <taxon>Brachycera</taxon>
        <taxon>Muscomorpha</taxon>
        <taxon>Ephydroidea</taxon>
        <taxon>Drosophilidae</taxon>
        <taxon>Drosophila</taxon>
        <taxon>Sophophora</taxon>
    </lineage>
</organism>
<protein>
    <recommendedName>
        <fullName>NADH-ubiquinone oxidoreductase chain 1</fullName>
        <ecNumber>7.1.1.2</ecNumber>
    </recommendedName>
    <alternativeName>
        <fullName>NADH dehydrogenase subunit 1</fullName>
    </alternativeName>
</protein>
<reference key="1">
    <citation type="journal article" date="1994" name="J. Mol. Evol.">
        <title>Phylogeny of the Drosophila obscura species group deduced from mitochondrial DNA sequences.</title>
        <authorList>
            <person name="Barrio E."/>
            <person name="Latorre A."/>
            <person name="Moya A."/>
        </authorList>
    </citation>
    <scope>NUCLEOTIDE SEQUENCE [GENOMIC DNA]</scope>
</reference>
<dbReference type="EC" id="7.1.1.2"/>
<dbReference type="EMBL" id="U07291">
    <property type="protein sequence ID" value="AAA76622.1"/>
    <property type="molecule type" value="Genomic_DNA"/>
</dbReference>
<dbReference type="EMBL" id="U07325">
    <property type="protein sequence ID" value="AAA76658.1"/>
    <property type="molecule type" value="Genomic_DNA"/>
</dbReference>
<dbReference type="SMR" id="P51932"/>
<dbReference type="GO" id="GO:0005743">
    <property type="term" value="C:mitochondrial inner membrane"/>
    <property type="evidence" value="ECO:0007669"/>
    <property type="project" value="UniProtKB-SubCell"/>
</dbReference>
<dbReference type="GO" id="GO:0008137">
    <property type="term" value="F:NADH dehydrogenase (ubiquinone) activity"/>
    <property type="evidence" value="ECO:0007669"/>
    <property type="project" value="UniProtKB-EC"/>
</dbReference>
<dbReference type="GO" id="GO:0009060">
    <property type="term" value="P:aerobic respiration"/>
    <property type="evidence" value="ECO:0007669"/>
    <property type="project" value="TreeGrafter"/>
</dbReference>
<dbReference type="InterPro" id="IPR001694">
    <property type="entry name" value="NADH_UbQ_OxRdtase_su1/FPO"/>
</dbReference>
<dbReference type="InterPro" id="IPR018086">
    <property type="entry name" value="NADH_UbQ_OxRdtase_su1_CS"/>
</dbReference>
<dbReference type="PANTHER" id="PTHR11432">
    <property type="entry name" value="NADH DEHYDROGENASE SUBUNIT 1"/>
    <property type="match status" value="1"/>
</dbReference>
<dbReference type="PANTHER" id="PTHR11432:SF3">
    <property type="entry name" value="NADH-UBIQUINONE OXIDOREDUCTASE CHAIN 1"/>
    <property type="match status" value="1"/>
</dbReference>
<dbReference type="Pfam" id="PF00146">
    <property type="entry name" value="NADHdh"/>
    <property type="match status" value="1"/>
</dbReference>
<dbReference type="PROSITE" id="PS00667">
    <property type="entry name" value="COMPLEX1_ND1_1"/>
    <property type="match status" value="1"/>
</dbReference>
<accession>P51932</accession>
<accession>Q34343</accession>